<gene>
    <name type="primary">CA3</name>
</gene>
<organism>
    <name type="scientific">Equus caballus</name>
    <name type="common">Horse</name>
    <dbReference type="NCBI Taxonomy" id="9796"/>
    <lineage>
        <taxon>Eukaryota</taxon>
        <taxon>Metazoa</taxon>
        <taxon>Chordata</taxon>
        <taxon>Craniata</taxon>
        <taxon>Vertebrata</taxon>
        <taxon>Euteleostomi</taxon>
        <taxon>Mammalia</taxon>
        <taxon>Eutheria</taxon>
        <taxon>Laurasiatheria</taxon>
        <taxon>Perissodactyla</taxon>
        <taxon>Equidae</taxon>
        <taxon>Equus</taxon>
    </lineage>
</organism>
<protein>
    <recommendedName>
        <fullName>Carbonic anhydrase 3</fullName>
        <ecNumber evidence="2">4.2.1.1</ecNumber>
    </recommendedName>
    <alternativeName>
        <fullName>Carbonate dehydratase III</fullName>
    </alternativeName>
    <alternativeName>
        <fullName>Carbonic anhydrase III</fullName>
        <shortName>CA-III</shortName>
    </alternativeName>
</protein>
<proteinExistence type="evidence at protein level"/>
<name>CAH3_HORSE</name>
<evidence type="ECO:0000250" key="1">
    <source>
        <dbReference type="UniProtKB" id="P00918"/>
    </source>
</evidence>
<evidence type="ECO:0000250" key="2">
    <source>
        <dbReference type="UniProtKB" id="P07451"/>
    </source>
</evidence>
<evidence type="ECO:0000250" key="3">
    <source>
        <dbReference type="UniProtKB" id="P14141"/>
    </source>
</evidence>
<evidence type="ECO:0000250" key="4">
    <source>
        <dbReference type="UniProtKB" id="P16015"/>
    </source>
</evidence>
<evidence type="ECO:0000255" key="5">
    <source>
        <dbReference type="PROSITE-ProRule" id="PRU01134"/>
    </source>
</evidence>
<evidence type="ECO:0000269" key="6">
    <source>
    </source>
</evidence>
<evidence type="ECO:0000305" key="7"/>
<feature type="initiator methionine" description="Removed" evidence="6">
    <location>
        <position position="1"/>
    </location>
</feature>
<feature type="chain" id="PRO_0000077425" description="Carbonic anhydrase 3">
    <location>
        <begin position="2"/>
        <end position="260"/>
    </location>
</feature>
<feature type="domain" description="Alpha-carbonic anhydrase" evidence="5">
    <location>
        <begin position="3"/>
        <end position="259"/>
    </location>
</feature>
<feature type="region of interest" description="Involved in proton transfer" evidence="2">
    <location>
        <begin position="64"/>
        <end position="67"/>
    </location>
</feature>
<feature type="binding site" evidence="1">
    <location>
        <position position="94"/>
    </location>
    <ligand>
        <name>Zn(2+)</name>
        <dbReference type="ChEBI" id="CHEBI:29105"/>
        <note>catalytic</note>
    </ligand>
</feature>
<feature type="binding site" evidence="1">
    <location>
        <position position="96"/>
    </location>
    <ligand>
        <name>Zn(2+)</name>
        <dbReference type="ChEBI" id="CHEBI:29105"/>
        <note>catalytic</note>
    </ligand>
</feature>
<feature type="binding site" evidence="1">
    <location>
        <position position="119"/>
    </location>
    <ligand>
        <name>Zn(2+)</name>
        <dbReference type="ChEBI" id="CHEBI:29105"/>
        <note>catalytic</note>
    </ligand>
</feature>
<feature type="binding site" evidence="1">
    <location>
        <begin position="198"/>
        <end position="199"/>
    </location>
    <ligand>
        <name>substrate</name>
    </ligand>
</feature>
<feature type="modified residue" description="N-acetylalanine" evidence="6">
    <location>
        <position position="2"/>
    </location>
</feature>
<feature type="modified residue" description="Phosphoserine" evidence="3">
    <location>
        <position position="29"/>
    </location>
</feature>
<feature type="modified residue" description="Phosphoserine" evidence="3">
    <location>
        <position position="43"/>
    </location>
</feature>
<feature type="modified residue" description="Phosphoserine" evidence="3">
    <location>
        <position position="50"/>
    </location>
</feature>
<feature type="modified residue" description="Phosphoserine" evidence="3">
    <location>
        <position position="55"/>
    </location>
</feature>
<feature type="modified residue" description="Phosphothreonine" evidence="3">
    <location>
        <position position="73"/>
    </location>
</feature>
<feature type="modified residue" description="Phosphotyrosine" evidence="3">
    <location>
        <position position="127"/>
    </location>
</feature>
<feature type="modified residue" description="Phosphothreonine" evidence="3">
    <location>
        <position position="129"/>
    </location>
</feature>
<feature type="modified residue" description="Phosphothreonine" evidence="4">
    <location>
        <position position="176"/>
    </location>
</feature>
<feature type="modified residue" description="S-glutathionyl cysteine" evidence="3">
    <location>
        <position position="182"/>
    </location>
</feature>
<feature type="modified residue" description="S-glutathionyl cysteine" evidence="3">
    <location>
        <position position="187"/>
    </location>
</feature>
<feature type="modified residue" description="Phosphothreonine" evidence="3">
    <location>
        <position position="216"/>
    </location>
</feature>
<feature type="modified residue" description="Phosphoserine" evidence="3">
    <location>
        <position position="219"/>
    </location>
</feature>
<sequence length="260" mass="29511">MAKEWGYADHNGPDHWHEFYPIAKGDNQSPIELHTKDINHDPSLKAWTASYDPGSAKTILNNGRTCRVVFDDTYDRSMLRGGPLTAPYRLRQFHLHWGSSDDHGSEHTVDGVKYAAELHLVHWNPKYNTYGGALKQPDGIAVVGVFLKIGREKGEFQLFLDALDKIKTKGKEAPFTNFDPSCLFPTCRDYWTYRGSFTTPPCEECIVWLLLKEPITVSSDQVAKLRSLFSSAENEPPVPLVRNWRPPQPLKGRVVRASFK</sequence>
<comment type="function">
    <text evidence="2">Reversible hydration of carbon dioxide.</text>
</comment>
<comment type="catalytic activity">
    <reaction evidence="2">
        <text>hydrogencarbonate + H(+) = CO2 + H2O</text>
        <dbReference type="Rhea" id="RHEA:10748"/>
        <dbReference type="ChEBI" id="CHEBI:15377"/>
        <dbReference type="ChEBI" id="CHEBI:15378"/>
        <dbReference type="ChEBI" id="CHEBI:16526"/>
        <dbReference type="ChEBI" id="CHEBI:17544"/>
        <dbReference type="EC" id="4.2.1.1"/>
    </reaction>
</comment>
<comment type="cofactor">
    <cofactor evidence="2">
        <name>Zn(2+)</name>
        <dbReference type="ChEBI" id="CHEBI:29105"/>
    </cofactor>
</comment>
<comment type="activity regulation">
    <text evidence="2">Inhibited by acetazolamide.</text>
</comment>
<comment type="subcellular location">
    <subcellularLocation>
        <location evidence="2">Cytoplasm</location>
    </subcellularLocation>
</comment>
<comment type="PTM">
    <text evidence="3">S-thiolated both by thiol-disulfide exchange with glutathione disulfide and by oxyradical-initiated S-thiolation with reduced glutathione.</text>
</comment>
<comment type="PTM">
    <text evidence="3">S-glutathionylated in hepatocytes under oxidative stress.</text>
</comment>
<comment type="similarity">
    <text evidence="7">Belongs to the alpha-carbonic anhydrase family.</text>
</comment>
<accession>P07450</accession>
<reference key="1">
    <citation type="journal article" date="1985" name="J. Biol. Chem.">
        <title>The sequence of equine muscle carbonic anhydrase.</title>
        <authorList>
            <person name="Wendorff K.M."/>
            <person name="Nishita T."/>
            <person name="Jabusch J.R."/>
            <person name="Deutsch H.F."/>
        </authorList>
    </citation>
    <scope>PROTEIN SEQUENCE OF 2-260</scope>
    <scope>ACETYLATION AT ALA-2</scope>
</reference>
<keyword id="KW-0007">Acetylation</keyword>
<keyword id="KW-0963">Cytoplasm</keyword>
<keyword id="KW-0903">Direct protein sequencing</keyword>
<keyword id="KW-0318">Glutathionylation</keyword>
<keyword id="KW-0456">Lyase</keyword>
<keyword id="KW-0479">Metal-binding</keyword>
<keyword id="KW-0597">Phosphoprotein</keyword>
<keyword id="KW-1185">Reference proteome</keyword>
<keyword id="KW-0862">Zinc</keyword>
<dbReference type="EC" id="4.2.1.1" evidence="2"/>
<dbReference type="PIR" id="A22612">
    <property type="entry name" value="A22612"/>
</dbReference>
<dbReference type="RefSeq" id="NP_001157426.1">
    <property type="nucleotide sequence ID" value="NM_001163954.1"/>
</dbReference>
<dbReference type="SMR" id="P07450"/>
<dbReference type="FunCoup" id="P07450">
    <property type="interactions" value="179"/>
</dbReference>
<dbReference type="STRING" id="9796.ENSECAP00000006508"/>
<dbReference type="iPTMnet" id="P07450"/>
<dbReference type="PaxDb" id="9796-ENSECAP00000006508"/>
<dbReference type="PeptideAtlas" id="P07450"/>
<dbReference type="Ensembl" id="ENSECAT00000008659.4">
    <property type="protein sequence ID" value="ENSECAP00000006508.3"/>
    <property type="gene ID" value="ENSECAG00000044498.1"/>
</dbReference>
<dbReference type="GeneID" id="100050125"/>
<dbReference type="KEGG" id="ecb:100050125"/>
<dbReference type="CTD" id="761"/>
<dbReference type="GeneTree" id="ENSGT00940000159435"/>
<dbReference type="HOGENOM" id="CLU_039326_2_1_1"/>
<dbReference type="InParanoid" id="P07450"/>
<dbReference type="OrthoDB" id="429145at2759"/>
<dbReference type="TreeFam" id="TF316425"/>
<dbReference type="Proteomes" id="UP000002281">
    <property type="component" value="Chromosome 9"/>
</dbReference>
<dbReference type="GO" id="GO:0005737">
    <property type="term" value="C:cytoplasm"/>
    <property type="evidence" value="ECO:0000318"/>
    <property type="project" value="GO_Central"/>
</dbReference>
<dbReference type="GO" id="GO:0005829">
    <property type="term" value="C:cytosol"/>
    <property type="evidence" value="ECO:0000318"/>
    <property type="project" value="GO_Central"/>
</dbReference>
<dbReference type="GO" id="GO:0004089">
    <property type="term" value="F:carbonate dehydratase activity"/>
    <property type="evidence" value="ECO:0000318"/>
    <property type="project" value="GO_Central"/>
</dbReference>
<dbReference type="GO" id="GO:0016151">
    <property type="term" value="F:nickel cation binding"/>
    <property type="evidence" value="ECO:0007669"/>
    <property type="project" value="Ensembl"/>
</dbReference>
<dbReference type="GO" id="GO:0008270">
    <property type="term" value="F:zinc ion binding"/>
    <property type="evidence" value="ECO:0007669"/>
    <property type="project" value="InterPro"/>
</dbReference>
<dbReference type="GO" id="GO:0009617">
    <property type="term" value="P:response to bacterium"/>
    <property type="evidence" value="ECO:0007669"/>
    <property type="project" value="Ensembl"/>
</dbReference>
<dbReference type="CDD" id="cd03119">
    <property type="entry name" value="alpha_CA_I_II_III_XIII"/>
    <property type="match status" value="1"/>
</dbReference>
<dbReference type="FunFam" id="3.10.200.10:FF:000001">
    <property type="entry name" value="Carbonic anhydrase 2"/>
    <property type="match status" value="1"/>
</dbReference>
<dbReference type="Gene3D" id="3.10.200.10">
    <property type="entry name" value="Alpha carbonic anhydrase"/>
    <property type="match status" value="1"/>
</dbReference>
<dbReference type="InterPro" id="IPR001148">
    <property type="entry name" value="CA_dom"/>
</dbReference>
<dbReference type="InterPro" id="IPR036398">
    <property type="entry name" value="CA_dom_sf"/>
</dbReference>
<dbReference type="InterPro" id="IPR023561">
    <property type="entry name" value="Carbonic_anhydrase_a-class"/>
</dbReference>
<dbReference type="InterPro" id="IPR018338">
    <property type="entry name" value="Carbonic_anhydrase_a-class_CS"/>
</dbReference>
<dbReference type="PANTHER" id="PTHR18952">
    <property type="entry name" value="CARBONIC ANHYDRASE"/>
    <property type="match status" value="1"/>
</dbReference>
<dbReference type="PANTHER" id="PTHR18952:SF127">
    <property type="entry name" value="CARBONIC ANHYDRASE 3"/>
    <property type="match status" value="1"/>
</dbReference>
<dbReference type="Pfam" id="PF00194">
    <property type="entry name" value="Carb_anhydrase"/>
    <property type="match status" value="1"/>
</dbReference>
<dbReference type="SMART" id="SM01057">
    <property type="entry name" value="Carb_anhydrase"/>
    <property type="match status" value="1"/>
</dbReference>
<dbReference type="SUPFAM" id="SSF51069">
    <property type="entry name" value="Carbonic anhydrase"/>
    <property type="match status" value="1"/>
</dbReference>
<dbReference type="PROSITE" id="PS00162">
    <property type="entry name" value="ALPHA_CA_1"/>
    <property type="match status" value="1"/>
</dbReference>
<dbReference type="PROSITE" id="PS51144">
    <property type="entry name" value="ALPHA_CA_2"/>
    <property type="match status" value="1"/>
</dbReference>